<proteinExistence type="inferred from homology"/>
<gene>
    <name evidence="1" type="primary">glmU</name>
    <name type="ordered locus">SPs1545</name>
</gene>
<protein>
    <recommendedName>
        <fullName evidence="1">Bifunctional protein GlmU</fullName>
    </recommendedName>
    <domain>
        <recommendedName>
            <fullName evidence="1">UDP-N-acetylglucosamine pyrophosphorylase</fullName>
            <ecNumber evidence="1">2.7.7.23</ecNumber>
        </recommendedName>
        <alternativeName>
            <fullName evidence="1">N-acetylglucosamine-1-phosphate uridyltransferase</fullName>
        </alternativeName>
    </domain>
    <domain>
        <recommendedName>
            <fullName evidence="1">Glucosamine-1-phosphate N-acetyltransferase</fullName>
            <ecNumber evidence="1">2.3.1.157</ecNumber>
        </recommendedName>
    </domain>
</protein>
<sequence length="460" mass="49601">MTNYAIILAAGKGTRMTSDLPKVLHKVSGLTMLEHVFRSVKAINPEKAVTVIGHKSEMVRAVLADQSAFVHQTEQLGTGHAVMMAETQLEGLEGHTLVIAGDTPLITGESLKSLIDFHVNHKNVATILTATAPDPFGYGRIVRNKDGEVIKIVEQKDANEYEQQLKEINTGTYVFDNKRLFEALKCITTNNAQGEYYLTDVVAIFRANKEKVGAYILRDFNESLGVNDRVALATAETVMRQRITQKHMVNGVTFHNPETVYIESDVTIAPDVLIEGNVTLKGRTHIGSGTVLTNGTYIVDSEIGDNCVVTNSMIESSVLAAGVTVGPYAHLRPGTTLDREVHIGNFVEVKGSHIGEKTKAGHLTYIGNAQVGSSVNVGAGTITVNYDGQNKYETVVGDHAFIGSNSTLIAPLEIGDNALTAAGSTISKTVPADSIVIGRSRQVTKEGYAKRLAHHPSRSK</sequence>
<evidence type="ECO:0000255" key="1">
    <source>
        <dbReference type="HAMAP-Rule" id="MF_01631"/>
    </source>
</evidence>
<feature type="chain" id="PRO_0000411369" description="Bifunctional protein GlmU">
    <location>
        <begin position="1"/>
        <end position="460"/>
    </location>
</feature>
<feature type="region of interest" description="Pyrophosphorylase" evidence="1">
    <location>
        <begin position="1"/>
        <end position="229"/>
    </location>
</feature>
<feature type="region of interest" description="Linker" evidence="1">
    <location>
        <begin position="230"/>
        <end position="250"/>
    </location>
</feature>
<feature type="region of interest" description="N-acetyltransferase" evidence="1">
    <location>
        <begin position="251"/>
        <end position="460"/>
    </location>
</feature>
<feature type="active site" description="Proton acceptor" evidence="1">
    <location>
        <position position="362"/>
    </location>
</feature>
<feature type="binding site" evidence="1">
    <location>
        <begin position="8"/>
        <end position="11"/>
    </location>
    <ligand>
        <name>UDP-N-acetyl-alpha-D-glucosamine</name>
        <dbReference type="ChEBI" id="CHEBI:57705"/>
    </ligand>
</feature>
<feature type="binding site" evidence="1">
    <location>
        <position position="22"/>
    </location>
    <ligand>
        <name>UDP-N-acetyl-alpha-D-glucosamine</name>
        <dbReference type="ChEBI" id="CHEBI:57705"/>
    </ligand>
</feature>
<feature type="binding site" evidence="1">
    <location>
        <position position="72"/>
    </location>
    <ligand>
        <name>UDP-N-acetyl-alpha-D-glucosamine</name>
        <dbReference type="ChEBI" id="CHEBI:57705"/>
    </ligand>
</feature>
<feature type="binding site" evidence="1">
    <location>
        <begin position="77"/>
        <end position="78"/>
    </location>
    <ligand>
        <name>UDP-N-acetyl-alpha-D-glucosamine</name>
        <dbReference type="ChEBI" id="CHEBI:57705"/>
    </ligand>
</feature>
<feature type="binding site" evidence="1">
    <location>
        <position position="102"/>
    </location>
    <ligand>
        <name>Mg(2+)</name>
        <dbReference type="ChEBI" id="CHEBI:18420"/>
    </ligand>
</feature>
<feature type="binding site" evidence="1">
    <location>
        <position position="139"/>
    </location>
    <ligand>
        <name>UDP-N-acetyl-alpha-D-glucosamine</name>
        <dbReference type="ChEBI" id="CHEBI:57705"/>
    </ligand>
</feature>
<feature type="binding site" evidence="1">
    <location>
        <position position="154"/>
    </location>
    <ligand>
        <name>UDP-N-acetyl-alpha-D-glucosamine</name>
        <dbReference type="ChEBI" id="CHEBI:57705"/>
    </ligand>
</feature>
<feature type="binding site" evidence="1">
    <location>
        <position position="169"/>
    </location>
    <ligand>
        <name>UDP-N-acetyl-alpha-D-glucosamine</name>
        <dbReference type="ChEBI" id="CHEBI:57705"/>
    </ligand>
</feature>
<feature type="binding site" evidence="1">
    <location>
        <position position="227"/>
    </location>
    <ligand>
        <name>Mg(2+)</name>
        <dbReference type="ChEBI" id="CHEBI:18420"/>
    </ligand>
</feature>
<feature type="binding site" evidence="1">
    <location>
        <position position="227"/>
    </location>
    <ligand>
        <name>UDP-N-acetyl-alpha-D-glucosamine</name>
        <dbReference type="ChEBI" id="CHEBI:57705"/>
    </ligand>
</feature>
<feature type="binding site" evidence="1">
    <location>
        <position position="332"/>
    </location>
    <ligand>
        <name>UDP-N-acetyl-alpha-D-glucosamine</name>
        <dbReference type="ChEBI" id="CHEBI:57705"/>
    </ligand>
</feature>
<feature type="binding site" evidence="1">
    <location>
        <position position="350"/>
    </location>
    <ligand>
        <name>UDP-N-acetyl-alpha-D-glucosamine</name>
        <dbReference type="ChEBI" id="CHEBI:57705"/>
    </ligand>
</feature>
<feature type="binding site" evidence="1">
    <location>
        <position position="365"/>
    </location>
    <ligand>
        <name>UDP-N-acetyl-alpha-D-glucosamine</name>
        <dbReference type="ChEBI" id="CHEBI:57705"/>
    </ligand>
</feature>
<feature type="binding site" evidence="1">
    <location>
        <position position="376"/>
    </location>
    <ligand>
        <name>UDP-N-acetyl-alpha-D-glucosamine</name>
        <dbReference type="ChEBI" id="CHEBI:57705"/>
    </ligand>
</feature>
<feature type="binding site" evidence="1">
    <location>
        <position position="379"/>
    </location>
    <ligand>
        <name>acetyl-CoA</name>
        <dbReference type="ChEBI" id="CHEBI:57288"/>
    </ligand>
</feature>
<feature type="binding site" evidence="1">
    <location>
        <begin position="385"/>
        <end position="386"/>
    </location>
    <ligand>
        <name>acetyl-CoA</name>
        <dbReference type="ChEBI" id="CHEBI:57288"/>
    </ligand>
</feature>
<feature type="binding site" evidence="1">
    <location>
        <position position="404"/>
    </location>
    <ligand>
        <name>acetyl-CoA</name>
        <dbReference type="ChEBI" id="CHEBI:57288"/>
    </ligand>
</feature>
<feature type="binding site" evidence="1">
    <location>
        <position position="422"/>
    </location>
    <ligand>
        <name>acetyl-CoA</name>
        <dbReference type="ChEBI" id="CHEBI:57288"/>
    </ligand>
</feature>
<feature type="binding site" evidence="1">
    <location>
        <position position="439"/>
    </location>
    <ligand>
        <name>acetyl-CoA</name>
        <dbReference type="ChEBI" id="CHEBI:57288"/>
    </ligand>
</feature>
<accession>P0DB63</accession>
<accession>Q79WE9</accession>
<accession>Q8K8F5</accession>
<dbReference type="EC" id="2.7.7.23" evidence="1"/>
<dbReference type="EC" id="2.3.1.157" evidence="1"/>
<dbReference type="EMBL" id="BA000034">
    <property type="protein sequence ID" value="BAC64640.1"/>
    <property type="molecule type" value="Genomic_DNA"/>
</dbReference>
<dbReference type="RefSeq" id="WP_011054236.1">
    <property type="nucleotide sequence ID" value="NC_004606.1"/>
</dbReference>
<dbReference type="SMR" id="P0DB63"/>
<dbReference type="KEGG" id="sps:SPs1545"/>
<dbReference type="HOGENOM" id="CLU_029499_15_2_9"/>
<dbReference type="UniPathway" id="UPA00113">
    <property type="reaction ID" value="UER00532"/>
</dbReference>
<dbReference type="UniPathway" id="UPA00113">
    <property type="reaction ID" value="UER00533"/>
</dbReference>
<dbReference type="UniPathway" id="UPA00973"/>
<dbReference type="GO" id="GO:0005737">
    <property type="term" value="C:cytoplasm"/>
    <property type="evidence" value="ECO:0007669"/>
    <property type="project" value="UniProtKB-SubCell"/>
</dbReference>
<dbReference type="GO" id="GO:0016020">
    <property type="term" value="C:membrane"/>
    <property type="evidence" value="ECO:0007669"/>
    <property type="project" value="GOC"/>
</dbReference>
<dbReference type="GO" id="GO:0019134">
    <property type="term" value="F:glucosamine-1-phosphate N-acetyltransferase activity"/>
    <property type="evidence" value="ECO:0007669"/>
    <property type="project" value="UniProtKB-UniRule"/>
</dbReference>
<dbReference type="GO" id="GO:0000287">
    <property type="term" value="F:magnesium ion binding"/>
    <property type="evidence" value="ECO:0007669"/>
    <property type="project" value="UniProtKB-UniRule"/>
</dbReference>
<dbReference type="GO" id="GO:0003977">
    <property type="term" value="F:UDP-N-acetylglucosamine diphosphorylase activity"/>
    <property type="evidence" value="ECO:0007669"/>
    <property type="project" value="UniProtKB-UniRule"/>
</dbReference>
<dbReference type="GO" id="GO:0000902">
    <property type="term" value="P:cell morphogenesis"/>
    <property type="evidence" value="ECO:0007669"/>
    <property type="project" value="UniProtKB-UniRule"/>
</dbReference>
<dbReference type="GO" id="GO:0071555">
    <property type="term" value="P:cell wall organization"/>
    <property type="evidence" value="ECO:0007669"/>
    <property type="project" value="UniProtKB-KW"/>
</dbReference>
<dbReference type="GO" id="GO:0009245">
    <property type="term" value="P:lipid A biosynthetic process"/>
    <property type="evidence" value="ECO:0007669"/>
    <property type="project" value="UniProtKB-UniRule"/>
</dbReference>
<dbReference type="GO" id="GO:0009252">
    <property type="term" value="P:peptidoglycan biosynthetic process"/>
    <property type="evidence" value="ECO:0007669"/>
    <property type="project" value="UniProtKB-UniRule"/>
</dbReference>
<dbReference type="GO" id="GO:0008360">
    <property type="term" value="P:regulation of cell shape"/>
    <property type="evidence" value="ECO:0007669"/>
    <property type="project" value="UniProtKB-KW"/>
</dbReference>
<dbReference type="GO" id="GO:0006048">
    <property type="term" value="P:UDP-N-acetylglucosamine biosynthetic process"/>
    <property type="evidence" value="ECO:0007669"/>
    <property type="project" value="UniProtKB-UniPathway"/>
</dbReference>
<dbReference type="CDD" id="cd02540">
    <property type="entry name" value="GT2_GlmU_N_bac"/>
    <property type="match status" value="1"/>
</dbReference>
<dbReference type="CDD" id="cd03353">
    <property type="entry name" value="LbH_GlmU_C"/>
    <property type="match status" value="1"/>
</dbReference>
<dbReference type="Gene3D" id="2.160.10.10">
    <property type="entry name" value="Hexapeptide repeat proteins"/>
    <property type="match status" value="1"/>
</dbReference>
<dbReference type="Gene3D" id="3.90.550.10">
    <property type="entry name" value="Spore Coat Polysaccharide Biosynthesis Protein SpsA, Chain A"/>
    <property type="match status" value="1"/>
</dbReference>
<dbReference type="HAMAP" id="MF_01631">
    <property type="entry name" value="GlmU"/>
    <property type="match status" value="1"/>
</dbReference>
<dbReference type="InterPro" id="IPR005882">
    <property type="entry name" value="Bifunctional_GlmU"/>
</dbReference>
<dbReference type="InterPro" id="IPR050065">
    <property type="entry name" value="GlmU-like"/>
</dbReference>
<dbReference type="InterPro" id="IPR038009">
    <property type="entry name" value="GlmU_C_LbH"/>
</dbReference>
<dbReference type="InterPro" id="IPR001451">
    <property type="entry name" value="Hexapep"/>
</dbReference>
<dbReference type="InterPro" id="IPR005835">
    <property type="entry name" value="NTP_transferase_dom"/>
</dbReference>
<dbReference type="InterPro" id="IPR029044">
    <property type="entry name" value="Nucleotide-diphossugar_trans"/>
</dbReference>
<dbReference type="InterPro" id="IPR011004">
    <property type="entry name" value="Trimer_LpxA-like_sf"/>
</dbReference>
<dbReference type="NCBIfam" id="TIGR01173">
    <property type="entry name" value="glmU"/>
    <property type="match status" value="1"/>
</dbReference>
<dbReference type="NCBIfam" id="NF010934">
    <property type="entry name" value="PRK14354.1"/>
    <property type="match status" value="1"/>
</dbReference>
<dbReference type="PANTHER" id="PTHR43584:SF3">
    <property type="entry name" value="BIFUNCTIONAL PROTEIN GLMU"/>
    <property type="match status" value="1"/>
</dbReference>
<dbReference type="PANTHER" id="PTHR43584">
    <property type="entry name" value="NUCLEOTIDYL TRANSFERASE"/>
    <property type="match status" value="1"/>
</dbReference>
<dbReference type="Pfam" id="PF00132">
    <property type="entry name" value="Hexapep"/>
    <property type="match status" value="1"/>
</dbReference>
<dbReference type="Pfam" id="PF00483">
    <property type="entry name" value="NTP_transferase"/>
    <property type="match status" value="1"/>
</dbReference>
<dbReference type="SUPFAM" id="SSF53448">
    <property type="entry name" value="Nucleotide-diphospho-sugar transferases"/>
    <property type="match status" value="1"/>
</dbReference>
<dbReference type="SUPFAM" id="SSF51161">
    <property type="entry name" value="Trimeric LpxA-like enzymes"/>
    <property type="match status" value="1"/>
</dbReference>
<reference key="1">
    <citation type="journal article" date="2003" name="Genome Res.">
        <title>Genome sequence of an M3 strain of Streptococcus pyogenes reveals a large-scale genomic rearrangement in invasive strains and new insights into phage evolution.</title>
        <authorList>
            <person name="Nakagawa I."/>
            <person name="Kurokawa K."/>
            <person name="Yamashita A."/>
            <person name="Nakata M."/>
            <person name="Tomiyasu Y."/>
            <person name="Okahashi N."/>
            <person name="Kawabata S."/>
            <person name="Yamazaki K."/>
            <person name="Shiba T."/>
            <person name="Yasunaga T."/>
            <person name="Hayashi H."/>
            <person name="Hattori M."/>
            <person name="Hamada S."/>
        </authorList>
    </citation>
    <scope>NUCLEOTIDE SEQUENCE [LARGE SCALE GENOMIC DNA]</scope>
    <source>
        <strain>SSI-1</strain>
    </source>
</reference>
<keyword id="KW-0012">Acyltransferase</keyword>
<keyword id="KW-0133">Cell shape</keyword>
<keyword id="KW-0961">Cell wall biogenesis/degradation</keyword>
<keyword id="KW-0963">Cytoplasm</keyword>
<keyword id="KW-0460">Magnesium</keyword>
<keyword id="KW-0479">Metal-binding</keyword>
<keyword id="KW-0511">Multifunctional enzyme</keyword>
<keyword id="KW-0548">Nucleotidyltransferase</keyword>
<keyword id="KW-0573">Peptidoglycan synthesis</keyword>
<keyword id="KW-0677">Repeat</keyword>
<keyword id="KW-0808">Transferase</keyword>
<organism>
    <name type="scientific">Streptococcus pyogenes serotype M3 (strain SSI-1)</name>
    <dbReference type="NCBI Taxonomy" id="193567"/>
    <lineage>
        <taxon>Bacteria</taxon>
        <taxon>Bacillati</taxon>
        <taxon>Bacillota</taxon>
        <taxon>Bacilli</taxon>
        <taxon>Lactobacillales</taxon>
        <taxon>Streptococcaceae</taxon>
        <taxon>Streptococcus</taxon>
    </lineage>
</organism>
<comment type="function">
    <text evidence="1">Catalyzes the last two sequential reactions in the de novo biosynthetic pathway for UDP-N-acetylglucosamine (UDP-GlcNAc). The C-terminal domain catalyzes the transfer of acetyl group from acetyl coenzyme A to glucosamine-1-phosphate (GlcN-1-P) to produce N-acetylglucosamine-1-phosphate (GlcNAc-1-P), which is converted into UDP-GlcNAc by the transfer of uridine 5-monophosphate (from uridine 5-triphosphate), a reaction catalyzed by the N-terminal domain.</text>
</comment>
<comment type="catalytic activity">
    <reaction evidence="1">
        <text>alpha-D-glucosamine 1-phosphate + acetyl-CoA = N-acetyl-alpha-D-glucosamine 1-phosphate + CoA + H(+)</text>
        <dbReference type="Rhea" id="RHEA:13725"/>
        <dbReference type="ChEBI" id="CHEBI:15378"/>
        <dbReference type="ChEBI" id="CHEBI:57287"/>
        <dbReference type="ChEBI" id="CHEBI:57288"/>
        <dbReference type="ChEBI" id="CHEBI:57776"/>
        <dbReference type="ChEBI" id="CHEBI:58516"/>
        <dbReference type="EC" id="2.3.1.157"/>
    </reaction>
</comment>
<comment type="catalytic activity">
    <reaction evidence="1">
        <text>N-acetyl-alpha-D-glucosamine 1-phosphate + UTP + H(+) = UDP-N-acetyl-alpha-D-glucosamine + diphosphate</text>
        <dbReference type="Rhea" id="RHEA:13509"/>
        <dbReference type="ChEBI" id="CHEBI:15378"/>
        <dbReference type="ChEBI" id="CHEBI:33019"/>
        <dbReference type="ChEBI" id="CHEBI:46398"/>
        <dbReference type="ChEBI" id="CHEBI:57705"/>
        <dbReference type="ChEBI" id="CHEBI:57776"/>
        <dbReference type="EC" id="2.7.7.23"/>
    </reaction>
</comment>
<comment type="cofactor">
    <cofactor evidence="1">
        <name>Mg(2+)</name>
        <dbReference type="ChEBI" id="CHEBI:18420"/>
    </cofactor>
    <text evidence="1">Binds 1 Mg(2+) ion per subunit.</text>
</comment>
<comment type="pathway">
    <text evidence="1">Nucleotide-sugar biosynthesis; UDP-N-acetyl-alpha-D-glucosamine biosynthesis; N-acetyl-alpha-D-glucosamine 1-phosphate from alpha-D-glucosamine 6-phosphate (route II): step 2/2.</text>
</comment>
<comment type="pathway">
    <text evidence="1">Nucleotide-sugar biosynthesis; UDP-N-acetyl-alpha-D-glucosamine biosynthesis; UDP-N-acetyl-alpha-D-glucosamine from N-acetyl-alpha-D-glucosamine 1-phosphate: step 1/1.</text>
</comment>
<comment type="pathway">
    <text evidence="1">Bacterial outer membrane biogenesis; LPS lipid A biosynthesis.</text>
</comment>
<comment type="subunit">
    <text evidence="1">Homotrimer.</text>
</comment>
<comment type="subcellular location">
    <subcellularLocation>
        <location evidence="1">Cytoplasm</location>
    </subcellularLocation>
</comment>
<comment type="similarity">
    <text evidence="1">In the N-terminal section; belongs to the N-acetylglucosamine-1-phosphate uridyltransferase family.</text>
</comment>
<comment type="similarity">
    <text evidence="1">In the C-terminal section; belongs to the transferase hexapeptide repeat family.</text>
</comment>
<name>GLMU_STRPQ</name>